<keyword id="KW-0238">DNA-binding</keyword>
<keyword id="KW-0539">Nucleus</keyword>
<keyword id="KW-1185">Reference proteome</keyword>
<keyword id="KW-0677">Repeat</keyword>
<keyword id="KW-0804">Transcription</keyword>
<keyword id="KW-0805">Transcription regulation</keyword>
<dbReference type="EMBL" id="AF296831">
    <property type="status" value="NOT_ANNOTATED_CDS"/>
    <property type="molecule type" value="Genomic_DNA"/>
</dbReference>
<dbReference type="EMBL" id="CP002688">
    <property type="protein sequence ID" value="AED93883.1"/>
    <property type="molecule type" value="Genomic_DNA"/>
</dbReference>
<dbReference type="RefSeq" id="NP_001154745.1">
    <property type="nucleotide sequence ID" value="NM_001161273.2"/>
</dbReference>
<dbReference type="SMR" id="F4KFT6"/>
<dbReference type="STRING" id="3702.F4KFT6"/>
<dbReference type="PaxDb" id="3702-AT5G32460.1"/>
<dbReference type="EnsemblPlants" id="AT5G32460.1">
    <property type="protein sequence ID" value="AT5G32460.1"/>
    <property type="gene ID" value="AT5G32460"/>
</dbReference>
<dbReference type="GeneID" id="3771028"/>
<dbReference type="Gramene" id="AT5G32460.1">
    <property type="protein sequence ID" value="AT5G32460.1"/>
    <property type="gene ID" value="AT5G32460"/>
</dbReference>
<dbReference type="KEGG" id="ath:AT5G32460"/>
<dbReference type="Araport" id="AT5G32460"/>
<dbReference type="TAIR" id="AT5G32460"/>
<dbReference type="HOGENOM" id="CLU_014437_2_1_1"/>
<dbReference type="InParanoid" id="F4KFT6"/>
<dbReference type="OMA" id="GWRELCD"/>
<dbReference type="PRO" id="PR:F4KFT6"/>
<dbReference type="Proteomes" id="UP000006548">
    <property type="component" value="Chromosome 5"/>
</dbReference>
<dbReference type="ExpressionAtlas" id="F4KFT6">
    <property type="expression patterns" value="baseline and differential"/>
</dbReference>
<dbReference type="GO" id="GO:0005634">
    <property type="term" value="C:nucleus"/>
    <property type="evidence" value="ECO:0007669"/>
    <property type="project" value="UniProtKB-SubCell"/>
</dbReference>
<dbReference type="GO" id="GO:0003677">
    <property type="term" value="F:DNA binding"/>
    <property type="evidence" value="ECO:0007669"/>
    <property type="project" value="UniProtKB-KW"/>
</dbReference>
<dbReference type="CDD" id="cd10017">
    <property type="entry name" value="B3_DNA"/>
    <property type="match status" value="4"/>
</dbReference>
<dbReference type="FunFam" id="2.40.330.10:FF:000009">
    <property type="entry name" value="Transcriptional factor B3 family protein"/>
    <property type="match status" value="1"/>
</dbReference>
<dbReference type="Gene3D" id="2.40.330.10">
    <property type="entry name" value="DNA-binding pseudobarrel domain"/>
    <property type="match status" value="4"/>
</dbReference>
<dbReference type="InterPro" id="IPR003340">
    <property type="entry name" value="B3_DNA-bd"/>
</dbReference>
<dbReference type="InterPro" id="IPR015300">
    <property type="entry name" value="DNA-bd_pseudobarrel_sf"/>
</dbReference>
<dbReference type="InterPro" id="IPR039218">
    <property type="entry name" value="REM_fam"/>
</dbReference>
<dbReference type="PANTHER" id="PTHR31674">
    <property type="entry name" value="B3 DOMAIN-CONTAINING PROTEIN REM-LIKE 3-RELATED"/>
    <property type="match status" value="1"/>
</dbReference>
<dbReference type="PANTHER" id="PTHR31674:SF62">
    <property type="entry name" value="B3 DOMAIN-CONTAINING PROTEIN REM14-RELATED"/>
    <property type="match status" value="1"/>
</dbReference>
<dbReference type="Pfam" id="PF02362">
    <property type="entry name" value="B3"/>
    <property type="match status" value="4"/>
</dbReference>
<dbReference type="SMART" id="SM01019">
    <property type="entry name" value="B3"/>
    <property type="match status" value="4"/>
</dbReference>
<dbReference type="SUPFAM" id="SSF101936">
    <property type="entry name" value="DNA-binding pseudobarrel domain"/>
    <property type="match status" value="4"/>
</dbReference>
<dbReference type="PROSITE" id="PS50863">
    <property type="entry name" value="B3"/>
    <property type="match status" value="4"/>
</dbReference>
<accession>F4KFT6</accession>
<sequence>MTDAMFSSSAKPHFIKPMLPGFETYIVIPKAFYSNYLEGRQEGNAAELRSDATEITWKIKIDGRRMTKGWEEFAVAHNLQVDDILVFRHEGNLLFHVTPFGLSFCEILYSQRDEKDVKDTTGKVTRSRTVKKNGKNECSSVDTDFVVPVTASNQRVDSFYLPRGFTTSSGSSKLCNEIILIDEKDRPSTLKLRYNKSSNRFCVSRGWRAFCCRNGYRTGCFLRIILVRKGKTPVLRIFPLERDEDNIEKHSKKVKQEVEHEESVKEETNVESGKLKRDRLLQKDPKNLCSTSQDTNFVVPVTASNQRHDSFHLPKGLTTSSGLSKLCKKIIFMDQKGRSSILDLSYSISDDRFTVRRGWKAFCCRNEHKTGCFLRLILVQNGKTPVLRIFPLERYENSIAKNSKKIKQEVEYESAKEEKNLESLSLSDNSSFVVSVTVSNLSEDILHLPIRLSRSNLLDKKIHEIVLMNKEGRTWILSLKYSKYSGRFRITRGWKSFCEANGQKPGCTFLLKLHLSMTRFDQDGVAWDKK</sequence>
<comment type="subcellular location">
    <subcellularLocation>
        <location evidence="1">Nucleus</location>
    </subcellularLocation>
</comment>
<proteinExistence type="inferred from homology"/>
<reference key="1">
    <citation type="journal article" date="2000" name="Nature">
        <title>Sequence and analysis of chromosome 5 of the plant Arabidopsis thaliana.</title>
        <authorList>
            <person name="Tabata S."/>
            <person name="Kaneko T."/>
            <person name="Nakamura Y."/>
            <person name="Kotani H."/>
            <person name="Kato T."/>
            <person name="Asamizu E."/>
            <person name="Miyajima N."/>
            <person name="Sasamoto S."/>
            <person name="Kimura T."/>
            <person name="Hosouchi T."/>
            <person name="Kawashima K."/>
            <person name="Kohara M."/>
            <person name="Matsumoto M."/>
            <person name="Matsuno A."/>
            <person name="Muraki A."/>
            <person name="Nakayama S."/>
            <person name="Nakazaki N."/>
            <person name="Naruo K."/>
            <person name="Okumura S."/>
            <person name="Shinpo S."/>
            <person name="Takeuchi C."/>
            <person name="Wada T."/>
            <person name="Watanabe A."/>
            <person name="Yamada M."/>
            <person name="Yasuda M."/>
            <person name="Sato S."/>
            <person name="de la Bastide M."/>
            <person name="Huang E."/>
            <person name="Spiegel L."/>
            <person name="Gnoj L."/>
            <person name="O'Shaughnessy A."/>
            <person name="Preston R."/>
            <person name="Habermann K."/>
            <person name="Murray J."/>
            <person name="Johnson D."/>
            <person name="Rohlfing T."/>
            <person name="Nelson J."/>
            <person name="Stoneking T."/>
            <person name="Pepin K."/>
            <person name="Spieth J."/>
            <person name="Sekhon M."/>
            <person name="Armstrong J."/>
            <person name="Becker M."/>
            <person name="Belter E."/>
            <person name="Cordum H."/>
            <person name="Cordes M."/>
            <person name="Courtney L."/>
            <person name="Courtney W."/>
            <person name="Dante M."/>
            <person name="Du H."/>
            <person name="Edwards J."/>
            <person name="Fryman J."/>
            <person name="Haakensen B."/>
            <person name="Lamar E."/>
            <person name="Latreille P."/>
            <person name="Leonard S."/>
            <person name="Meyer R."/>
            <person name="Mulvaney E."/>
            <person name="Ozersky P."/>
            <person name="Riley A."/>
            <person name="Strowmatt C."/>
            <person name="Wagner-McPherson C."/>
            <person name="Wollam A."/>
            <person name="Yoakum M."/>
            <person name="Bell M."/>
            <person name="Dedhia N."/>
            <person name="Parnell L."/>
            <person name="Shah R."/>
            <person name="Rodriguez M."/>
            <person name="Hoon See L."/>
            <person name="Vil D."/>
            <person name="Baker J."/>
            <person name="Kirchoff K."/>
            <person name="Toth K."/>
            <person name="King L."/>
            <person name="Bahret A."/>
            <person name="Miller B."/>
            <person name="Marra M.A."/>
            <person name="Martienssen R."/>
            <person name="McCombie W.R."/>
            <person name="Wilson R.K."/>
            <person name="Murphy G."/>
            <person name="Bancroft I."/>
            <person name="Volckaert G."/>
            <person name="Wambutt R."/>
            <person name="Duesterhoeft A."/>
            <person name="Stiekema W."/>
            <person name="Pohl T."/>
            <person name="Entian K.-D."/>
            <person name="Terryn N."/>
            <person name="Hartley N."/>
            <person name="Bent E."/>
            <person name="Johnson S."/>
            <person name="Langham S.-A."/>
            <person name="McCullagh B."/>
            <person name="Robben J."/>
            <person name="Grymonprez B."/>
            <person name="Zimmermann W."/>
            <person name="Ramsperger U."/>
            <person name="Wedler H."/>
            <person name="Balke K."/>
            <person name="Wedler E."/>
            <person name="Peters S."/>
            <person name="van Staveren M."/>
            <person name="Dirkse W."/>
            <person name="Mooijman P."/>
            <person name="Klein Lankhorst R."/>
            <person name="Weitzenegger T."/>
            <person name="Bothe G."/>
            <person name="Rose M."/>
            <person name="Hauf J."/>
            <person name="Berneiser S."/>
            <person name="Hempel S."/>
            <person name="Feldpausch M."/>
            <person name="Lamberth S."/>
            <person name="Villarroel R."/>
            <person name="Gielen J."/>
            <person name="Ardiles W."/>
            <person name="Bents O."/>
            <person name="Lemcke K."/>
            <person name="Kolesov G."/>
            <person name="Mayer K.F.X."/>
            <person name="Rudd S."/>
            <person name="Schoof H."/>
            <person name="Schueller C."/>
            <person name="Zaccaria P."/>
            <person name="Mewes H.-W."/>
            <person name="Bevan M."/>
            <person name="Fransz P.F."/>
        </authorList>
    </citation>
    <scope>NUCLEOTIDE SEQUENCE [LARGE SCALE GENOMIC DNA]</scope>
    <source>
        <strain>cv. Columbia</strain>
    </source>
</reference>
<reference key="2">
    <citation type="journal article" date="2017" name="Plant J.">
        <title>Araport11: a complete reannotation of the Arabidopsis thaliana reference genome.</title>
        <authorList>
            <person name="Cheng C.Y."/>
            <person name="Krishnakumar V."/>
            <person name="Chan A.P."/>
            <person name="Thibaud-Nissen F."/>
            <person name="Schobel S."/>
            <person name="Town C.D."/>
        </authorList>
    </citation>
    <scope>GENOME REANNOTATION</scope>
    <source>
        <strain>cv. Columbia</strain>
    </source>
</reference>
<reference key="3">
    <citation type="journal article" date="2008" name="Trends Plant Sci.">
        <title>The plant B3 superfamily.</title>
        <authorList>
            <person name="Swaminathan K."/>
            <person name="Peterson K."/>
            <person name="Jack T."/>
        </authorList>
    </citation>
    <scope>GENE FAMILY</scope>
</reference>
<organism>
    <name type="scientific">Arabidopsis thaliana</name>
    <name type="common">Mouse-ear cress</name>
    <dbReference type="NCBI Taxonomy" id="3702"/>
    <lineage>
        <taxon>Eukaryota</taxon>
        <taxon>Viridiplantae</taxon>
        <taxon>Streptophyta</taxon>
        <taxon>Embryophyta</taxon>
        <taxon>Tracheophyta</taxon>
        <taxon>Spermatophyta</taxon>
        <taxon>Magnoliopsida</taxon>
        <taxon>eudicotyledons</taxon>
        <taxon>Gunneridae</taxon>
        <taxon>Pentapetalae</taxon>
        <taxon>rosids</taxon>
        <taxon>malvids</taxon>
        <taxon>Brassicales</taxon>
        <taxon>Brassicaceae</taxon>
        <taxon>Camelineae</taxon>
        <taxon>Arabidopsis</taxon>
    </lineage>
</organism>
<evidence type="ECO:0000255" key="1">
    <source>
        <dbReference type="PROSITE-ProRule" id="PRU00326"/>
    </source>
</evidence>
<evidence type="ECO:0000256" key="2">
    <source>
        <dbReference type="SAM" id="MobiDB-lite"/>
    </source>
</evidence>
<protein>
    <recommendedName>
        <fullName>B3 domain-containing protein REM-like 3</fullName>
    </recommendedName>
    <alternativeName>
        <fullName>Protein REPRODUCTIVE MERISTEM-like 3</fullName>
    </alternativeName>
</protein>
<feature type="chain" id="PRO_0000412840" description="B3 domain-containing protein REM-like 3">
    <location>
        <begin position="1"/>
        <end position="530"/>
    </location>
</feature>
<feature type="DNA-binding region" description="TF-B3 1" evidence="1">
    <location>
        <begin position="11"/>
        <end position="103"/>
    </location>
</feature>
<feature type="DNA-binding region" description="TF-B3 2" evidence="1">
    <location>
        <begin position="144"/>
        <end position="241"/>
    </location>
</feature>
<feature type="DNA-binding region" description="TF-B3 3" evidence="1">
    <location>
        <begin position="296"/>
        <end position="393"/>
    </location>
</feature>
<feature type="DNA-binding region" description="TF-B3 4" evidence="1">
    <location>
        <begin position="431"/>
        <end position="530"/>
    </location>
</feature>
<feature type="region of interest" description="Disordered" evidence="2">
    <location>
        <begin position="251"/>
        <end position="276"/>
    </location>
</feature>
<feature type="compositionally biased region" description="Basic and acidic residues" evidence="2">
    <location>
        <begin position="254"/>
        <end position="276"/>
    </location>
</feature>
<name>REML3_ARATH</name>
<gene>
    <name type="ordered locus">At5g32460</name>
    <name type="ORF">F18O9.70</name>
</gene>